<reference key="1">
    <citation type="journal article" date="2008" name="PLoS ONE">
        <title>An optimized chloroplast DNA extraction protocol for grasses (Poaceae) proves suitable for whole plastid genome sequencing and SNP detection.</title>
        <authorList>
            <person name="Diekmann K."/>
            <person name="Hodkinson T.R."/>
            <person name="Fricke E."/>
            <person name="Barth S."/>
        </authorList>
    </citation>
    <scope>NUCLEOTIDE SEQUENCE [LARGE SCALE GENOMIC DNA]</scope>
    <source>
        <strain>cv. Cashel</strain>
    </source>
</reference>
<protein>
    <recommendedName>
        <fullName evidence="1">Photosystem II CP47 reaction center protein</fullName>
    </recommendedName>
    <alternativeName>
        <fullName evidence="1">PSII 47 kDa protein</fullName>
    </alternativeName>
    <alternativeName>
        <fullName evidence="1">Protein CP-47</fullName>
    </alternativeName>
</protein>
<accession>A8Y9B2</accession>
<name>PSBB_LOLPR</name>
<keyword id="KW-0148">Chlorophyll</keyword>
<keyword id="KW-0150">Chloroplast</keyword>
<keyword id="KW-0157">Chromophore</keyword>
<keyword id="KW-0472">Membrane</keyword>
<keyword id="KW-0602">Photosynthesis</keyword>
<keyword id="KW-0604">Photosystem II</keyword>
<keyword id="KW-0934">Plastid</keyword>
<keyword id="KW-0793">Thylakoid</keyword>
<keyword id="KW-0812">Transmembrane</keyword>
<keyword id="KW-1133">Transmembrane helix</keyword>
<evidence type="ECO:0000255" key="1">
    <source>
        <dbReference type="HAMAP-Rule" id="MF_01495"/>
    </source>
</evidence>
<sequence length="508" mass="56018">MGLPWYRVHTVVLNDPGRLLAVHIMHTALVSGWAGSMALYELAVFDPSDPVLDPMWRQGMFVIPFMTRLGITDSWGGWSISGGTVTNPGIWSYEGVAGAHIVFSGLCFLAAIWHWVYWDLAIFSDDRTGKPSLDLPKIFGIHLFLAGVACFGFGAFHVTGLYGPGIWVSDPYGLTGKVQAVNPAWGAEGFDPFVPGGIASHHIAAGTLGILAGLFHLSVRPPQRLYKGLRMGNIETVLSSSIAAVFFAAFVVAGTMWYGSATTPIELFGPTRYQWDQGYFQQEIYRRVSNGLAENLSLSEAWSKIPEKLAFYDYIGNNPAKGGLFRAGSMDNGDGIAVGWLGHPVFRDKEGRELFVRRMPTFFETFPVVLVDEEGIVRADVPFRRAESKYSVEQVGVTVEFYGGELNGVSYSDPATVKKYARRSQLGEIFELDRATLKSDGVFRSSPRGWFTFGHATFALLFFFGHIWHGARTLFRDVFAGIDPDLDAQVEFGTFQKVGDPTTRKQAV</sequence>
<gene>
    <name evidence="1" type="primary">psbB</name>
    <name type="ordered locus">LopeCp067</name>
</gene>
<proteinExistence type="inferred from homology"/>
<geneLocation type="chloroplast"/>
<feature type="chain" id="PRO_0000359838" description="Photosystem II CP47 reaction center protein">
    <location>
        <begin position="1"/>
        <end position="508"/>
    </location>
</feature>
<feature type="transmembrane region" description="Helical" evidence="1">
    <location>
        <begin position="21"/>
        <end position="36"/>
    </location>
</feature>
<feature type="transmembrane region" description="Helical" evidence="1">
    <location>
        <begin position="101"/>
        <end position="115"/>
    </location>
</feature>
<feature type="transmembrane region" description="Helical" evidence="1">
    <location>
        <begin position="140"/>
        <end position="156"/>
    </location>
</feature>
<feature type="transmembrane region" description="Helical" evidence="1">
    <location>
        <begin position="203"/>
        <end position="218"/>
    </location>
</feature>
<feature type="transmembrane region" description="Helical" evidence="1">
    <location>
        <begin position="237"/>
        <end position="252"/>
    </location>
</feature>
<feature type="transmembrane region" description="Helical" evidence="1">
    <location>
        <begin position="457"/>
        <end position="472"/>
    </location>
</feature>
<dbReference type="EMBL" id="AM777385">
    <property type="protein sequence ID" value="CAO86001.1"/>
    <property type="molecule type" value="Genomic_DNA"/>
</dbReference>
<dbReference type="RefSeq" id="YP_001531307.1">
    <property type="nucleotide sequence ID" value="NC_009950.1"/>
</dbReference>
<dbReference type="SMR" id="A8Y9B2"/>
<dbReference type="GeneID" id="5696590"/>
<dbReference type="KEGG" id="lper:5696590"/>
<dbReference type="GO" id="GO:0009535">
    <property type="term" value="C:chloroplast thylakoid membrane"/>
    <property type="evidence" value="ECO:0007669"/>
    <property type="project" value="UniProtKB-SubCell"/>
</dbReference>
<dbReference type="GO" id="GO:0009523">
    <property type="term" value="C:photosystem II"/>
    <property type="evidence" value="ECO:0007669"/>
    <property type="project" value="UniProtKB-KW"/>
</dbReference>
<dbReference type="GO" id="GO:0016168">
    <property type="term" value="F:chlorophyll binding"/>
    <property type="evidence" value="ECO:0007669"/>
    <property type="project" value="UniProtKB-UniRule"/>
</dbReference>
<dbReference type="GO" id="GO:0045156">
    <property type="term" value="F:electron transporter, transferring electrons within the cyclic electron transport pathway of photosynthesis activity"/>
    <property type="evidence" value="ECO:0007669"/>
    <property type="project" value="InterPro"/>
</dbReference>
<dbReference type="GO" id="GO:0009772">
    <property type="term" value="P:photosynthetic electron transport in photosystem II"/>
    <property type="evidence" value="ECO:0007669"/>
    <property type="project" value="InterPro"/>
</dbReference>
<dbReference type="FunFam" id="3.10.680.10:FF:000001">
    <property type="entry name" value="Photosystem II CP47 reaction center protein"/>
    <property type="match status" value="1"/>
</dbReference>
<dbReference type="Gene3D" id="3.10.680.10">
    <property type="entry name" value="Photosystem II CP47 reaction center protein"/>
    <property type="match status" value="1"/>
</dbReference>
<dbReference type="HAMAP" id="MF_01495">
    <property type="entry name" value="PSII_PsbB_CP47"/>
    <property type="match status" value="1"/>
</dbReference>
<dbReference type="InterPro" id="IPR000932">
    <property type="entry name" value="PS_antenna-like"/>
</dbReference>
<dbReference type="InterPro" id="IPR036001">
    <property type="entry name" value="PS_II_antenna-like_sf"/>
</dbReference>
<dbReference type="InterPro" id="IPR017486">
    <property type="entry name" value="PSII_PsbB"/>
</dbReference>
<dbReference type="NCBIfam" id="TIGR03039">
    <property type="entry name" value="PS_II_CP47"/>
    <property type="match status" value="1"/>
</dbReference>
<dbReference type="PANTHER" id="PTHR33180">
    <property type="entry name" value="PHOTOSYSTEM II CP43 REACTION CENTER PROTEIN"/>
    <property type="match status" value="1"/>
</dbReference>
<dbReference type="PANTHER" id="PTHR33180:SF37">
    <property type="entry name" value="PHOTOSYSTEM II CP43 REACTION CENTER PROTEIN"/>
    <property type="match status" value="1"/>
</dbReference>
<dbReference type="Pfam" id="PF00421">
    <property type="entry name" value="PSII"/>
    <property type="match status" value="1"/>
</dbReference>
<dbReference type="SUPFAM" id="SSF161077">
    <property type="entry name" value="Photosystem II antenna protein-like"/>
    <property type="match status" value="1"/>
</dbReference>
<organism>
    <name type="scientific">Lolium perenne</name>
    <name type="common">Perennial ryegrass</name>
    <dbReference type="NCBI Taxonomy" id="4522"/>
    <lineage>
        <taxon>Eukaryota</taxon>
        <taxon>Viridiplantae</taxon>
        <taxon>Streptophyta</taxon>
        <taxon>Embryophyta</taxon>
        <taxon>Tracheophyta</taxon>
        <taxon>Spermatophyta</taxon>
        <taxon>Magnoliopsida</taxon>
        <taxon>Liliopsida</taxon>
        <taxon>Poales</taxon>
        <taxon>Poaceae</taxon>
        <taxon>BOP clade</taxon>
        <taxon>Pooideae</taxon>
        <taxon>Poodae</taxon>
        <taxon>Poeae</taxon>
        <taxon>Poeae Chloroplast Group 2 (Poeae type)</taxon>
        <taxon>Loliodinae</taxon>
        <taxon>Loliinae</taxon>
        <taxon>Lolium</taxon>
    </lineage>
</organism>
<comment type="function">
    <text evidence="1">One of the components of the core complex of photosystem II (PSII). It binds chlorophyll and helps catalyze the primary light-induced photochemical processes of PSII. PSII is a light-driven water:plastoquinone oxidoreductase, using light energy to abstract electrons from H(2)O, generating O(2) and a proton gradient subsequently used for ATP formation.</text>
</comment>
<comment type="cofactor">
    <text evidence="1">Binds multiple chlorophylls. PSII binds additional chlorophylls, carotenoids and specific lipids.</text>
</comment>
<comment type="subunit">
    <text evidence="1">PSII is composed of 1 copy each of membrane proteins PsbA, PsbB, PsbC, PsbD, PsbE, PsbF, PsbH, PsbI, PsbJ, PsbK, PsbL, PsbM, PsbT, PsbX, PsbY, PsbZ, Psb30/Ycf12, at least 3 peripheral proteins of the oxygen-evolving complex and a large number of cofactors. It forms dimeric complexes.</text>
</comment>
<comment type="subcellular location">
    <subcellularLocation>
        <location evidence="1">Plastid</location>
        <location evidence="1">Chloroplast thylakoid membrane</location>
        <topology evidence="1">Multi-pass membrane protein</topology>
    </subcellularLocation>
</comment>
<comment type="similarity">
    <text evidence="1">Belongs to the PsbB/PsbC family. PsbB subfamily.</text>
</comment>